<keyword id="KW-1015">Disulfide bond</keyword>
<keyword id="KW-0872">Ion channel impairing toxin</keyword>
<keyword id="KW-0528">Neurotoxin</keyword>
<keyword id="KW-0964">Secreted</keyword>
<keyword id="KW-0800">Toxin</keyword>
<keyword id="KW-0738">Voltage-gated sodium channel impairing toxin</keyword>
<reference key="1">
    <citation type="journal article" date="1999" name="J. Mol. Evol.">
        <title>Dynamic diversification from a putative common ancestor of scorpion toxins affecting sodium, potassium, and chloride channels.</title>
        <authorList>
            <person name="Froy O."/>
            <person name="Sagiv T."/>
            <person name="Poreh M."/>
            <person name="Urbach D."/>
            <person name="Zilberberg N."/>
            <person name="Gurevitz M."/>
        </authorList>
    </citation>
    <scope>NUCLEOTIDE SEQUENCE [GENOMIC DNA]</scope>
    <source>
        <tissue>Single abdominal segment</tissue>
    </source>
</reference>
<protein>
    <recommendedName>
        <fullName>Toxin Boma6c</fullName>
    </recommendedName>
    <alternativeName>
        <fullName>Alpha-neurotoxin Bom alpha-6c</fullName>
    </alternativeName>
</protein>
<dbReference type="SMR" id="P60257"/>
<dbReference type="GO" id="GO:0005576">
    <property type="term" value="C:extracellular region"/>
    <property type="evidence" value="ECO:0007669"/>
    <property type="project" value="UniProtKB-SubCell"/>
</dbReference>
<dbReference type="GO" id="GO:0019871">
    <property type="term" value="F:sodium channel inhibitor activity"/>
    <property type="evidence" value="ECO:0007669"/>
    <property type="project" value="InterPro"/>
</dbReference>
<dbReference type="GO" id="GO:0090729">
    <property type="term" value="F:toxin activity"/>
    <property type="evidence" value="ECO:0007669"/>
    <property type="project" value="UniProtKB-KW"/>
</dbReference>
<dbReference type="GO" id="GO:0006952">
    <property type="term" value="P:defense response"/>
    <property type="evidence" value="ECO:0007669"/>
    <property type="project" value="InterPro"/>
</dbReference>
<dbReference type="CDD" id="cd23106">
    <property type="entry name" value="neurotoxins_LC_scorpion"/>
    <property type="match status" value="1"/>
</dbReference>
<dbReference type="FunFam" id="3.30.30.10:FF:000002">
    <property type="entry name" value="Alpha-like toxin BmK-M1"/>
    <property type="match status" value="1"/>
</dbReference>
<dbReference type="Gene3D" id="3.30.30.10">
    <property type="entry name" value="Knottin, scorpion toxin-like"/>
    <property type="match status" value="1"/>
</dbReference>
<dbReference type="InterPro" id="IPR044062">
    <property type="entry name" value="LCN-type_CS_alpha_beta_dom"/>
</dbReference>
<dbReference type="InterPro" id="IPR003614">
    <property type="entry name" value="Scorpion_toxin-like"/>
</dbReference>
<dbReference type="InterPro" id="IPR036574">
    <property type="entry name" value="Scorpion_toxin-like_sf"/>
</dbReference>
<dbReference type="InterPro" id="IPR018218">
    <property type="entry name" value="Scorpion_toxinL"/>
</dbReference>
<dbReference type="InterPro" id="IPR002061">
    <property type="entry name" value="Scorpion_toxinL/defensin"/>
</dbReference>
<dbReference type="Pfam" id="PF00537">
    <property type="entry name" value="Toxin_3"/>
    <property type="match status" value="1"/>
</dbReference>
<dbReference type="PRINTS" id="PR00285">
    <property type="entry name" value="SCORPNTOXIN"/>
</dbReference>
<dbReference type="SMART" id="SM00505">
    <property type="entry name" value="Knot1"/>
    <property type="match status" value="1"/>
</dbReference>
<dbReference type="SUPFAM" id="SSF57095">
    <property type="entry name" value="Scorpion toxin-like"/>
    <property type="match status" value="1"/>
</dbReference>
<dbReference type="PROSITE" id="PS51863">
    <property type="entry name" value="LCN_CSAB"/>
    <property type="match status" value="1"/>
</dbReference>
<accession>P60257</accession>
<sequence>VRDAYIAQNYNCVYTCFKDAHCNDLCTKNGASSGYCQWAGKYGNACWCYALPDNVPIRIPGKCHRK</sequence>
<name>SCXC_BUTOM</name>
<proteinExistence type="inferred from homology"/>
<organism>
    <name type="scientific">Buthus occitanus mardochei</name>
    <name type="common">Moroccan scorpion</name>
    <name type="synonym">Buthus mardochei</name>
    <dbReference type="NCBI Taxonomy" id="6869"/>
    <lineage>
        <taxon>Eukaryota</taxon>
        <taxon>Metazoa</taxon>
        <taxon>Ecdysozoa</taxon>
        <taxon>Arthropoda</taxon>
        <taxon>Chelicerata</taxon>
        <taxon>Arachnida</taxon>
        <taxon>Scorpiones</taxon>
        <taxon>Buthida</taxon>
        <taxon>Buthoidea</taxon>
        <taxon>Buthidae</taxon>
        <taxon>Buthus</taxon>
    </lineage>
</organism>
<evidence type="ECO:0000250" key="1"/>
<evidence type="ECO:0000255" key="2">
    <source>
        <dbReference type="PROSITE-ProRule" id="PRU01210"/>
    </source>
</evidence>
<evidence type="ECO:0000305" key="3"/>
<feature type="chain" id="PRO_0000066741" description="Toxin Boma6c">
    <location>
        <begin position="1"/>
        <end position="66"/>
    </location>
</feature>
<feature type="domain" description="LCN-type CS-alpha/beta" evidence="2">
    <location>
        <begin position="2"/>
        <end position="64"/>
    </location>
</feature>
<feature type="disulfide bond" evidence="2">
    <location>
        <begin position="12"/>
        <end position="63"/>
    </location>
</feature>
<feature type="disulfide bond" evidence="2">
    <location>
        <begin position="16"/>
        <end position="36"/>
    </location>
</feature>
<feature type="disulfide bond" evidence="2">
    <location>
        <begin position="22"/>
        <end position="46"/>
    </location>
</feature>
<feature type="disulfide bond" evidence="2">
    <location>
        <begin position="26"/>
        <end position="48"/>
    </location>
</feature>
<comment type="function">
    <text evidence="1">Alpha toxins bind voltage-independently at site-3 of sodium channels (Nav) and inhibit the inactivation of the activated channels, thereby blocking neuronal transmission.</text>
</comment>
<comment type="subcellular location">
    <subcellularLocation>
        <location>Secreted</location>
    </subcellularLocation>
</comment>
<comment type="tissue specificity">
    <text>Expressed by the venom gland.</text>
</comment>
<comment type="domain">
    <text evidence="3">Has the structural arrangement of an alpha-helix connected to antiparallel beta-sheets by disulfide bonds (CS-alpha/beta).</text>
</comment>
<comment type="similarity">
    <text evidence="3">Belongs to the long (4 C-C) scorpion toxin superfamily. Sodium channel inhibitor family. Alpha subfamily.</text>
</comment>